<reference key="1">
    <citation type="submission" date="2007-10" db="EMBL/GenBank/DDBJ databases">
        <title>Complete sequence of chromosome 1 of Burkholderia multivorans ATCC 17616.</title>
        <authorList>
            <person name="Copeland A."/>
            <person name="Lucas S."/>
            <person name="Lapidus A."/>
            <person name="Barry K."/>
            <person name="Glavina del Rio T."/>
            <person name="Dalin E."/>
            <person name="Tice H."/>
            <person name="Pitluck S."/>
            <person name="Chain P."/>
            <person name="Malfatti S."/>
            <person name="Shin M."/>
            <person name="Vergez L."/>
            <person name="Schmutz J."/>
            <person name="Larimer F."/>
            <person name="Land M."/>
            <person name="Hauser L."/>
            <person name="Kyrpides N."/>
            <person name="Kim E."/>
            <person name="Tiedje J."/>
            <person name="Richardson P."/>
        </authorList>
    </citation>
    <scope>NUCLEOTIDE SEQUENCE [LARGE SCALE GENOMIC DNA]</scope>
    <source>
        <strain>ATCC 17616 / 249</strain>
    </source>
</reference>
<reference key="2">
    <citation type="submission" date="2007-04" db="EMBL/GenBank/DDBJ databases">
        <title>Complete genome sequence of Burkholderia multivorans ATCC 17616.</title>
        <authorList>
            <person name="Ohtsubo Y."/>
            <person name="Yamashita A."/>
            <person name="Kurokawa K."/>
            <person name="Takami H."/>
            <person name="Yuhara S."/>
            <person name="Nishiyama E."/>
            <person name="Endo R."/>
            <person name="Miyazaki R."/>
            <person name="Ono A."/>
            <person name="Yano K."/>
            <person name="Ito M."/>
            <person name="Sota M."/>
            <person name="Yuji N."/>
            <person name="Hattori M."/>
            <person name="Tsuda M."/>
        </authorList>
    </citation>
    <scope>NUCLEOTIDE SEQUENCE [LARGE SCALE GENOMIC DNA]</scope>
    <source>
        <strain>ATCC 17616 / 249</strain>
    </source>
</reference>
<proteinExistence type="inferred from homology"/>
<comment type="function">
    <text evidence="1">Catalyzes the NADPH-dependent rearrangement and reduction of 1-deoxy-D-xylulose-5-phosphate (DXP) to 2-C-methyl-D-erythritol 4-phosphate (MEP).</text>
</comment>
<comment type="catalytic activity">
    <reaction evidence="1">
        <text>2-C-methyl-D-erythritol 4-phosphate + NADP(+) = 1-deoxy-D-xylulose 5-phosphate + NADPH + H(+)</text>
        <dbReference type="Rhea" id="RHEA:13717"/>
        <dbReference type="ChEBI" id="CHEBI:15378"/>
        <dbReference type="ChEBI" id="CHEBI:57783"/>
        <dbReference type="ChEBI" id="CHEBI:57792"/>
        <dbReference type="ChEBI" id="CHEBI:58262"/>
        <dbReference type="ChEBI" id="CHEBI:58349"/>
        <dbReference type="EC" id="1.1.1.267"/>
    </reaction>
    <physiologicalReaction direction="right-to-left" evidence="1">
        <dbReference type="Rhea" id="RHEA:13719"/>
    </physiologicalReaction>
</comment>
<comment type="cofactor">
    <cofactor evidence="1">
        <name>Mg(2+)</name>
        <dbReference type="ChEBI" id="CHEBI:18420"/>
    </cofactor>
    <cofactor evidence="1">
        <name>Mn(2+)</name>
        <dbReference type="ChEBI" id="CHEBI:29035"/>
    </cofactor>
</comment>
<comment type="pathway">
    <text evidence="1">Isoprenoid biosynthesis; isopentenyl diphosphate biosynthesis via DXP pathway; isopentenyl diphosphate from 1-deoxy-D-xylulose 5-phosphate: step 1/6.</text>
</comment>
<comment type="similarity">
    <text evidence="1">Belongs to the DXR family.</text>
</comment>
<name>DXR_BURM1</name>
<evidence type="ECO:0000255" key="1">
    <source>
        <dbReference type="HAMAP-Rule" id="MF_00183"/>
    </source>
</evidence>
<keyword id="KW-0414">Isoprene biosynthesis</keyword>
<keyword id="KW-0464">Manganese</keyword>
<keyword id="KW-0479">Metal-binding</keyword>
<keyword id="KW-0521">NADP</keyword>
<keyword id="KW-0560">Oxidoreductase</keyword>
<keyword id="KW-1185">Reference proteome</keyword>
<dbReference type="EC" id="1.1.1.267" evidence="1"/>
<dbReference type="EMBL" id="CP000868">
    <property type="protein sequence ID" value="ABX14951.1"/>
    <property type="molecule type" value="Genomic_DNA"/>
</dbReference>
<dbReference type="EMBL" id="AP009385">
    <property type="protein sequence ID" value="BAG43901.1"/>
    <property type="molecule type" value="Genomic_DNA"/>
</dbReference>
<dbReference type="RefSeq" id="WP_006407705.1">
    <property type="nucleotide sequence ID" value="NC_010804.1"/>
</dbReference>
<dbReference type="SMR" id="A9AIM0"/>
<dbReference type="STRING" id="395019.BMULJ_01984"/>
<dbReference type="KEGG" id="bmj:BMULJ_01984"/>
<dbReference type="KEGG" id="bmu:Bmul_1263"/>
<dbReference type="eggNOG" id="COG0743">
    <property type="taxonomic scope" value="Bacteria"/>
</dbReference>
<dbReference type="HOGENOM" id="CLU_035714_4_0_4"/>
<dbReference type="UniPathway" id="UPA00056">
    <property type="reaction ID" value="UER00092"/>
</dbReference>
<dbReference type="Proteomes" id="UP000008815">
    <property type="component" value="Chromosome 1"/>
</dbReference>
<dbReference type="GO" id="GO:0030604">
    <property type="term" value="F:1-deoxy-D-xylulose-5-phosphate reductoisomerase activity"/>
    <property type="evidence" value="ECO:0007669"/>
    <property type="project" value="UniProtKB-UniRule"/>
</dbReference>
<dbReference type="GO" id="GO:0030145">
    <property type="term" value="F:manganese ion binding"/>
    <property type="evidence" value="ECO:0007669"/>
    <property type="project" value="TreeGrafter"/>
</dbReference>
<dbReference type="GO" id="GO:0070402">
    <property type="term" value="F:NADPH binding"/>
    <property type="evidence" value="ECO:0007669"/>
    <property type="project" value="InterPro"/>
</dbReference>
<dbReference type="GO" id="GO:0051484">
    <property type="term" value="P:isopentenyl diphosphate biosynthetic process, methylerythritol 4-phosphate pathway involved in terpenoid biosynthetic process"/>
    <property type="evidence" value="ECO:0007669"/>
    <property type="project" value="TreeGrafter"/>
</dbReference>
<dbReference type="FunFam" id="3.40.50.720:FF:000045">
    <property type="entry name" value="1-deoxy-D-xylulose 5-phosphate reductoisomerase"/>
    <property type="match status" value="1"/>
</dbReference>
<dbReference type="Gene3D" id="1.10.1740.10">
    <property type="match status" value="1"/>
</dbReference>
<dbReference type="Gene3D" id="3.40.50.720">
    <property type="entry name" value="NAD(P)-binding Rossmann-like Domain"/>
    <property type="match status" value="1"/>
</dbReference>
<dbReference type="HAMAP" id="MF_00183">
    <property type="entry name" value="DXP_reductoisom"/>
    <property type="match status" value="1"/>
</dbReference>
<dbReference type="InterPro" id="IPR003821">
    <property type="entry name" value="DXP_reductoisomerase"/>
</dbReference>
<dbReference type="InterPro" id="IPR013644">
    <property type="entry name" value="DXP_reductoisomerase_C"/>
</dbReference>
<dbReference type="InterPro" id="IPR013512">
    <property type="entry name" value="DXP_reductoisomerase_N"/>
</dbReference>
<dbReference type="InterPro" id="IPR026877">
    <property type="entry name" value="DXPR_C"/>
</dbReference>
<dbReference type="InterPro" id="IPR036169">
    <property type="entry name" value="DXPR_C_sf"/>
</dbReference>
<dbReference type="InterPro" id="IPR036291">
    <property type="entry name" value="NAD(P)-bd_dom_sf"/>
</dbReference>
<dbReference type="NCBIfam" id="TIGR00243">
    <property type="entry name" value="Dxr"/>
    <property type="match status" value="1"/>
</dbReference>
<dbReference type="NCBIfam" id="NF003938">
    <property type="entry name" value="PRK05447.1-1"/>
    <property type="match status" value="1"/>
</dbReference>
<dbReference type="NCBIfam" id="NF009114">
    <property type="entry name" value="PRK12464.1"/>
    <property type="match status" value="1"/>
</dbReference>
<dbReference type="PANTHER" id="PTHR30525">
    <property type="entry name" value="1-DEOXY-D-XYLULOSE 5-PHOSPHATE REDUCTOISOMERASE"/>
    <property type="match status" value="1"/>
</dbReference>
<dbReference type="PANTHER" id="PTHR30525:SF0">
    <property type="entry name" value="1-DEOXY-D-XYLULOSE 5-PHOSPHATE REDUCTOISOMERASE, CHLOROPLASTIC"/>
    <property type="match status" value="1"/>
</dbReference>
<dbReference type="Pfam" id="PF08436">
    <property type="entry name" value="DXP_redisom_C"/>
    <property type="match status" value="1"/>
</dbReference>
<dbReference type="Pfam" id="PF02670">
    <property type="entry name" value="DXP_reductoisom"/>
    <property type="match status" value="1"/>
</dbReference>
<dbReference type="Pfam" id="PF13288">
    <property type="entry name" value="DXPR_C"/>
    <property type="match status" value="1"/>
</dbReference>
<dbReference type="PIRSF" id="PIRSF006205">
    <property type="entry name" value="Dxp_reductismrs"/>
    <property type="match status" value="1"/>
</dbReference>
<dbReference type="SUPFAM" id="SSF69055">
    <property type="entry name" value="1-deoxy-D-xylulose-5-phosphate reductoisomerase, C-terminal domain"/>
    <property type="match status" value="1"/>
</dbReference>
<dbReference type="SUPFAM" id="SSF55347">
    <property type="entry name" value="Glyceraldehyde-3-phosphate dehydrogenase-like, C-terminal domain"/>
    <property type="match status" value="1"/>
</dbReference>
<dbReference type="SUPFAM" id="SSF51735">
    <property type="entry name" value="NAD(P)-binding Rossmann-fold domains"/>
    <property type="match status" value="1"/>
</dbReference>
<gene>
    <name evidence="1" type="primary">dxr</name>
    <name type="ordered locus">Bmul_1263</name>
    <name type="ordered locus">BMULJ_01984</name>
</gene>
<feature type="chain" id="PRO_1000098478" description="1-deoxy-D-xylulose 5-phosphate reductoisomerase">
    <location>
        <begin position="1"/>
        <end position="398"/>
    </location>
</feature>
<feature type="binding site" evidence="1">
    <location>
        <position position="11"/>
    </location>
    <ligand>
        <name>NADPH</name>
        <dbReference type="ChEBI" id="CHEBI:57783"/>
    </ligand>
</feature>
<feature type="binding site" evidence="1">
    <location>
        <position position="12"/>
    </location>
    <ligand>
        <name>NADPH</name>
        <dbReference type="ChEBI" id="CHEBI:57783"/>
    </ligand>
</feature>
<feature type="binding site" evidence="1">
    <location>
        <position position="13"/>
    </location>
    <ligand>
        <name>NADPH</name>
        <dbReference type="ChEBI" id="CHEBI:57783"/>
    </ligand>
</feature>
<feature type="binding site" evidence="1">
    <location>
        <position position="14"/>
    </location>
    <ligand>
        <name>NADPH</name>
        <dbReference type="ChEBI" id="CHEBI:57783"/>
    </ligand>
</feature>
<feature type="binding site" evidence="1">
    <location>
        <position position="38"/>
    </location>
    <ligand>
        <name>NADPH</name>
        <dbReference type="ChEBI" id="CHEBI:57783"/>
    </ligand>
</feature>
<feature type="binding site" evidence="1">
    <location>
        <position position="39"/>
    </location>
    <ligand>
        <name>NADPH</name>
        <dbReference type="ChEBI" id="CHEBI:57783"/>
    </ligand>
</feature>
<feature type="binding site" evidence="1">
    <location>
        <position position="125"/>
    </location>
    <ligand>
        <name>NADPH</name>
        <dbReference type="ChEBI" id="CHEBI:57783"/>
    </ligand>
</feature>
<feature type="binding site" evidence="1">
    <location>
        <position position="126"/>
    </location>
    <ligand>
        <name>1-deoxy-D-xylulose 5-phosphate</name>
        <dbReference type="ChEBI" id="CHEBI:57792"/>
    </ligand>
</feature>
<feature type="binding site" evidence="1">
    <location>
        <position position="127"/>
    </location>
    <ligand>
        <name>NADPH</name>
        <dbReference type="ChEBI" id="CHEBI:57783"/>
    </ligand>
</feature>
<feature type="binding site" evidence="1">
    <location>
        <position position="151"/>
    </location>
    <ligand>
        <name>Mn(2+)</name>
        <dbReference type="ChEBI" id="CHEBI:29035"/>
    </ligand>
</feature>
<feature type="binding site" evidence="1">
    <location>
        <position position="152"/>
    </location>
    <ligand>
        <name>1-deoxy-D-xylulose 5-phosphate</name>
        <dbReference type="ChEBI" id="CHEBI:57792"/>
    </ligand>
</feature>
<feature type="binding site" evidence="1">
    <location>
        <position position="153"/>
    </location>
    <ligand>
        <name>1-deoxy-D-xylulose 5-phosphate</name>
        <dbReference type="ChEBI" id="CHEBI:57792"/>
    </ligand>
</feature>
<feature type="binding site" evidence="1">
    <location>
        <position position="153"/>
    </location>
    <ligand>
        <name>Mn(2+)</name>
        <dbReference type="ChEBI" id="CHEBI:29035"/>
    </ligand>
</feature>
<feature type="binding site" evidence="1">
    <location>
        <position position="179"/>
    </location>
    <ligand>
        <name>1-deoxy-D-xylulose 5-phosphate</name>
        <dbReference type="ChEBI" id="CHEBI:57792"/>
    </ligand>
</feature>
<feature type="binding site" evidence="1">
    <location>
        <position position="202"/>
    </location>
    <ligand>
        <name>1-deoxy-D-xylulose 5-phosphate</name>
        <dbReference type="ChEBI" id="CHEBI:57792"/>
    </ligand>
</feature>
<feature type="binding site" evidence="1">
    <location>
        <position position="208"/>
    </location>
    <ligand>
        <name>NADPH</name>
        <dbReference type="ChEBI" id="CHEBI:57783"/>
    </ligand>
</feature>
<feature type="binding site" evidence="1">
    <location>
        <position position="215"/>
    </location>
    <ligand>
        <name>1-deoxy-D-xylulose 5-phosphate</name>
        <dbReference type="ChEBI" id="CHEBI:57792"/>
    </ligand>
</feature>
<feature type="binding site" evidence="1">
    <location>
        <position position="220"/>
    </location>
    <ligand>
        <name>1-deoxy-D-xylulose 5-phosphate</name>
        <dbReference type="ChEBI" id="CHEBI:57792"/>
    </ligand>
</feature>
<feature type="binding site" evidence="1">
    <location>
        <position position="221"/>
    </location>
    <ligand>
        <name>1-deoxy-D-xylulose 5-phosphate</name>
        <dbReference type="ChEBI" id="CHEBI:57792"/>
    </ligand>
</feature>
<feature type="binding site" evidence="1">
    <location>
        <position position="224"/>
    </location>
    <ligand>
        <name>1-deoxy-D-xylulose 5-phosphate</name>
        <dbReference type="ChEBI" id="CHEBI:57792"/>
    </ligand>
</feature>
<feature type="binding site" evidence="1">
    <location>
        <position position="224"/>
    </location>
    <ligand>
        <name>Mn(2+)</name>
        <dbReference type="ChEBI" id="CHEBI:29035"/>
    </ligand>
</feature>
<organism>
    <name type="scientific">Burkholderia multivorans (strain ATCC 17616 / 249)</name>
    <dbReference type="NCBI Taxonomy" id="395019"/>
    <lineage>
        <taxon>Bacteria</taxon>
        <taxon>Pseudomonadati</taxon>
        <taxon>Pseudomonadota</taxon>
        <taxon>Betaproteobacteria</taxon>
        <taxon>Burkholderiales</taxon>
        <taxon>Burkholderiaceae</taxon>
        <taxon>Burkholderia</taxon>
        <taxon>Burkholderia cepacia complex</taxon>
    </lineage>
</organism>
<protein>
    <recommendedName>
        <fullName evidence="1">1-deoxy-D-xylulose 5-phosphate reductoisomerase</fullName>
        <shortName evidence="1">DXP reductoisomerase</shortName>
        <ecNumber evidence="1">1.1.1.267</ecNumber>
    </recommendedName>
    <alternativeName>
        <fullName evidence="1">1-deoxyxylulose-5-phosphate reductoisomerase</fullName>
    </alternativeName>
    <alternativeName>
        <fullName evidence="1">2-C-methyl-D-erythritol 4-phosphate synthase</fullName>
    </alternativeName>
</protein>
<sequence>MQKRLTLLGSTGSIGDSTLDVVARHPERFSVYALTAHRNGDKLVEQCLRFAPEVAVVGDAATAAHVEARLRAAGSRTTVLYGPQALVDVSKSDGCDTVVAAIVGAAGLAPSLAAARAGKRILLANKESLVMSGAIFMDAVRDHGAILLPVDSEHNAIFQCMPRDAAEHGGIAKIILTASGGPFRTREPATLVDVTPDEACKHPNWVMGRKISVDSATMMNKGLEVIEAHWIFGLPGDRIDVLIHPQSVIHSLVSYRDGSVLAQLGNPDMRTPIAHALAFPERVDAGVEQLDLAQIAQLSFEKPDYARFPCLALALKALAEGGIASAALNAANEVAVEAFLERRIGFMAIAATVEAVLDALPNRAPDGLDDVLAADAEARRLAAEIIAKAPARRVERTV</sequence>
<accession>A9AIM0</accession>